<protein>
    <recommendedName>
        <fullName evidence="1">NADH-quinone oxidoreductase subunit A 2</fullName>
        <ecNumber evidence="1">7.1.1.-</ecNumber>
    </recommendedName>
    <alternativeName>
        <fullName evidence="1">NADH dehydrogenase I subunit A 2</fullName>
    </alternativeName>
    <alternativeName>
        <fullName evidence="1">NDH-1 subunit A 2</fullName>
    </alternativeName>
    <alternativeName>
        <fullName evidence="1">NUO1 2</fullName>
    </alternativeName>
</protein>
<organism>
    <name type="scientific">Pseudomonas paraeruginosa (strain DSM 24068 / PA7)</name>
    <name type="common">Pseudomonas aeruginosa (strain PA7)</name>
    <dbReference type="NCBI Taxonomy" id="381754"/>
    <lineage>
        <taxon>Bacteria</taxon>
        <taxon>Pseudomonadati</taxon>
        <taxon>Pseudomonadota</taxon>
        <taxon>Gammaproteobacteria</taxon>
        <taxon>Pseudomonadales</taxon>
        <taxon>Pseudomonadaceae</taxon>
        <taxon>Pseudomonas</taxon>
        <taxon>Pseudomonas paraeruginosa</taxon>
    </lineage>
</organism>
<evidence type="ECO:0000255" key="1">
    <source>
        <dbReference type="HAMAP-Rule" id="MF_01394"/>
    </source>
</evidence>
<name>NUOA2_PSEP7</name>
<keyword id="KW-0997">Cell inner membrane</keyword>
<keyword id="KW-1003">Cell membrane</keyword>
<keyword id="KW-0472">Membrane</keyword>
<keyword id="KW-0520">NAD</keyword>
<keyword id="KW-0874">Quinone</keyword>
<keyword id="KW-1278">Translocase</keyword>
<keyword id="KW-0812">Transmembrane</keyword>
<keyword id="KW-1133">Transmembrane helix</keyword>
<keyword id="KW-0813">Transport</keyword>
<keyword id="KW-0830">Ubiquinone</keyword>
<dbReference type="EC" id="7.1.1.-" evidence="1"/>
<dbReference type="EMBL" id="CP000744">
    <property type="protein sequence ID" value="ABR85462.1"/>
    <property type="molecule type" value="Genomic_DNA"/>
</dbReference>
<dbReference type="RefSeq" id="WP_012076112.1">
    <property type="nucleotide sequence ID" value="NC_009656.1"/>
</dbReference>
<dbReference type="SMR" id="A6V6S8"/>
<dbReference type="KEGG" id="pap:PSPA7_3402"/>
<dbReference type="HOGENOM" id="CLU_119549_2_1_6"/>
<dbReference type="Proteomes" id="UP000001582">
    <property type="component" value="Chromosome"/>
</dbReference>
<dbReference type="GO" id="GO:0030964">
    <property type="term" value="C:NADH dehydrogenase complex"/>
    <property type="evidence" value="ECO:0007669"/>
    <property type="project" value="TreeGrafter"/>
</dbReference>
<dbReference type="GO" id="GO:0005886">
    <property type="term" value="C:plasma membrane"/>
    <property type="evidence" value="ECO:0007669"/>
    <property type="project" value="UniProtKB-SubCell"/>
</dbReference>
<dbReference type="GO" id="GO:0008137">
    <property type="term" value="F:NADH dehydrogenase (ubiquinone) activity"/>
    <property type="evidence" value="ECO:0007669"/>
    <property type="project" value="InterPro"/>
</dbReference>
<dbReference type="GO" id="GO:0050136">
    <property type="term" value="F:NADH:ubiquinone reductase (non-electrogenic) activity"/>
    <property type="evidence" value="ECO:0007669"/>
    <property type="project" value="UniProtKB-UniRule"/>
</dbReference>
<dbReference type="GO" id="GO:0048038">
    <property type="term" value="F:quinone binding"/>
    <property type="evidence" value="ECO:0007669"/>
    <property type="project" value="UniProtKB-KW"/>
</dbReference>
<dbReference type="Gene3D" id="1.20.58.1610">
    <property type="entry name" value="NADH:ubiquinone/plastoquinone oxidoreductase, chain 3"/>
    <property type="match status" value="1"/>
</dbReference>
<dbReference type="HAMAP" id="MF_01394">
    <property type="entry name" value="NDH1_NuoA"/>
    <property type="match status" value="1"/>
</dbReference>
<dbReference type="InterPro" id="IPR023043">
    <property type="entry name" value="NAD(P)H_OxRDtase_bac/plastid"/>
</dbReference>
<dbReference type="InterPro" id="IPR000440">
    <property type="entry name" value="NADH_UbQ/plastoQ_OxRdtase_su3"/>
</dbReference>
<dbReference type="InterPro" id="IPR038430">
    <property type="entry name" value="NDAH_ubi_oxred_su3_sf"/>
</dbReference>
<dbReference type="PANTHER" id="PTHR11058:SF21">
    <property type="entry name" value="NADH-QUINONE OXIDOREDUCTASE SUBUNIT A"/>
    <property type="match status" value="1"/>
</dbReference>
<dbReference type="PANTHER" id="PTHR11058">
    <property type="entry name" value="NADH-UBIQUINONE OXIDOREDUCTASE CHAIN 3"/>
    <property type="match status" value="1"/>
</dbReference>
<dbReference type="Pfam" id="PF00507">
    <property type="entry name" value="Oxidored_q4"/>
    <property type="match status" value="1"/>
</dbReference>
<proteinExistence type="inferred from homology"/>
<accession>A6V6S8</accession>
<gene>
    <name evidence="1" type="primary">nuoA2</name>
    <name type="ordered locus">PSPA7_3402</name>
</gene>
<feature type="chain" id="PRO_0000362735" description="NADH-quinone oxidoreductase subunit A 2">
    <location>
        <begin position="1"/>
        <end position="132"/>
    </location>
</feature>
<feature type="transmembrane region" description="Helical" evidence="1">
    <location>
        <begin position="9"/>
        <end position="29"/>
    </location>
</feature>
<feature type="transmembrane region" description="Helical" evidence="1">
    <location>
        <begin position="66"/>
        <end position="86"/>
    </location>
</feature>
<feature type="transmembrane region" description="Helical" evidence="1">
    <location>
        <begin position="93"/>
        <end position="113"/>
    </location>
</feature>
<sequence>MHGILSPGAWAFIAYVLGAVALCLVMLGLGRVLGGRSHGRAKNLPFESGVDSTGSARLRFPVKYALVAMLFVIFGIEMPFLYLWAVSVRENGWAGFVEVALFVSLLLAGLFYLHRVGALDWSPERRRRKPRD</sequence>
<reference key="1">
    <citation type="submission" date="2007-06" db="EMBL/GenBank/DDBJ databases">
        <authorList>
            <person name="Dodson R.J."/>
            <person name="Harkins D."/>
            <person name="Paulsen I.T."/>
        </authorList>
    </citation>
    <scope>NUCLEOTIDE SEQUENCE [LARGE SCALE GENOMIC DNA]</scope>
    <source>
        <strain>DSM 24068 / PA7</strain>
    </source>
</reference>
<comment type="function">
    <text evidence="1">NDH-1 shuttles electrons from NADH, via FMN and iron-sulfur (Fe-S) centers, to quinones in the respiratory chain. The immediate electron acceptor for the enzyme in this species is believed to be ubiquinone. Couples the redox reaction to proton translocation (for every two electrons transferred, four hydrogen ions are translocated across the cytoplasmic membrane), and thus conserves the redox energy in a proton gradient.</text>
</comment>
<comment type="catalytic activity">
    <reaction evidence="1">
        <text>a quinone + NADH + 5 H(+)(in) = a quinol + NAD(+) + 4 H(+)(out)</text>
        <dbReference type="Rhea" id="RHEA:57888"/>
        <dbReference type="ChEBI" id="CHEBI:15378"/>
        <dbReference type="ChEBI" id="CHEBI:24646"/>
        <dbReference type="ChEBI" id="CHEBI:57540"/>
        <dbReference type="ChEBI" id="CHEBI:57945"/>
        <dbReference type="ChEBI" id="CHEBI:132124"/>
    </reaction>
</comment>
<comment type="subunit">
    <text evidence="1">NDH-1 is composed of 13 different subunits. Subunits NuoA, H, J, K, L, M, N constitute the membrane sector of the complex.</text>
</comment>
<comment type="subcellular location">
    <subcellularLocation>
        <location evidence="1">Cell inner membrane</location>
        <topology evidence="1">Multi-pass membrane protein</topology>
    </subcellularLocation>
</comment>
<comment type="similarity">
    <text evidence="1">Belongs to the complex I subunit 3 family.</text>
</comment>